<dbReference type="EC" id="2.7.1.17"/>
<dbReference type="EMBL" id="AM270126">
    <property type="protein sequence ID" value="CAL00248.1"/>
    <property type="molecule type" value="Genomic_DNA"/>
</dbReference>
<dbReference type="RefSeq" id="XP_001391397.1">
    <property type="nucleotide sequence ID" value="XM_001391360.2"/>
</dbReference>
<dbReference type="SMR" id="A2QMS4"/>
<dbReference type="EnsemblFungi" id="CAL00248">
    <property type="protein sequence ID" value="CAL00248"/>
    <property type="gene ID" value="An07g03140"/>
</dbReference>
<dbReference type="GeneID" id="4981581"/>
<dbReference type="KEGG" id="ang:An07g03140"/>
<dbReference type="VEuPathDB" id="FungiDB:An07g03140"/>
<dbReference type="HOGENOM" id="CLU_016149_5_0_1"/>
<dbReference type="Proteomes" id="UP000006706">
    <property type="component" value="Chromosome 4L"/>
</dbReference>
<dbReference type="GO" id="GO:0005829">
    <property type="term" value="C:cytosol"/>
    <property type="evidence" value="ECO:0007669"/>
    <property type="project" value="TreeGrafter"/>
</dbReference>
<dbReference type="GO" id="GO:0005524">
    <property type="term" value="F:ATP binding"/>
    <property type="evidence" value="ECO:0007669"/>
    <property type="project" value="UniProtKB-KW"/>
</dbReference>
<dbReference type="GO" id="GO:0004856">
    <property type="term" value="F:D-xylulokinase activity"/>
    <property type="evidence" value="ECO:0007669"/>
    <property type="project" value="UniProtKB-EC"/>
</dbReference>
<dbReference type="GO" id="GO:0042732">
    <property type="term" value="P:D-xylose metabolic process"/>
    <property type="evidence" value="ECO:0007669"/>
    <property type="project" value="UniProtKB-KW"/>
</dbReference>
<dbReference type="GO" id="GO:0005997">
    <property type="term" value="P:xylulose metabolic process"/>
    <property type="evidence" value="ECO:0007669"/>
    <property type="project" value="TreeGrafter"/>
</dbReference>
<dbReference type="CDD" id="cd07776">
    <property type="entry name" value="ASKHA_NBD_FGGY_SpXK-like"/>
    <property type="match status" value="1"/>
</dbReference>
<dbReference type="FunFam" id="3.30.420.40:FF:000118">
    <property type="entry name" value="Xylulose kinase 2"/>
    <property type="match status" value="1"/>
</dbReference>
<dbReference type="Gene3D" id="3.30.420.40">
    <property type="match status" value="2"/>
</dbReference>
<dbReference type="InterPro" id="IPR043129">
    <property type="entry name" value="ATPase_NBD"/>
</dbReference>
<dbReference type="InterPro" id="IPR042024">
    <property type="entry name" value="D-XK_euk"/>
</dbReference>
<dbReference type="InterPro" id="IPR018485">
    <property type="entry name" value="FGGY_C"/>
</dbReference>
<dbReference type="InterPro" id="IPR018484">
    <property type="entry name" value="FGGY_N"/>
</dbReference>
<dbReference type="PANTHER" id="PTHR10196">
    <property type="entry name" value="SUGAR KINASE"/>
    <property type="match status" value="1"/>
</dbReference>
<dbReference type="PANTHER" id="PTHR10196:SF57">
    <property type="entry name" value="XYLULOSE KINASE"/>
    <property type="match status" value="1"/>
</dbReference>
<dbReference type="Pfam" id="PF02782">
    <property type="entry name" value="FGGY_C"/>
    <property type="match status" value="1"/>
</dbReference>
<dbReference type="Pfam" id="PF00370">
    <property type="entry name" value="FGGY_N"/>
    <property type="match status" value="1"/>
</dbReference>
<dbReference type="SUPFAM" id="SSF53067">
    <property type="entry name" value="Actin-like ATPase domain"/>
    <property type="match status" value="2"/>
</dbReference>
<organism>
    <name type="scientific">Aspergillus niger (strain ATCC MYA-4892 / CBS 513.88 / FGSC A1513)</name>
    <dbReference type="NCBI Taxonomy" id="425011"/>
    <lineage>
        <taxon>Eukaryota</taxon>
        <taxon>Fungi</taxon>
        <taxon>Dikarya</taxon>
        <taxon>Ascomycota</taxon>
        <taxon>Pezizomycotina</taxon>
        <taxon>Eurotiomycetes</taxon>
        <taxon>Eurotiomycetidae</taxon>
        <taxon>Eurotiales</taxon>
        <taxon>Aspergillaceae</taxon>
        <taxon>Aspergillus</taxon>
        <taxon>Aspergillus subgen. Circumdati</taxon>
    </lineage>
</organism>
<accession>A2QMS4</accession>
<gene>
    <name type="primary">xkiA</name>
    <name type="ORF">An07g03140</name>
</gene>
<keyword id="KW-0067">ATP-binding</keyword>
<keyword id="KW-0119">Carbohydrate metabolism</keyword>
<keyword id="KW-0963">Cytoplasm</keyword>
<keyword id="KW-0418">Kinase</keyword>
<keyword id="KW-0547">Nucleotide-binding</keyword>
<keyword id="KW-1185">Reference proteome</keyword>
<keyword id="KW-0808">Transferase</keyword>
<keyword id="KW-0859">Xylose metabolism</keyword>
<proteinExistence type="evidence at transcript level"/>
<name>XKS1_ASPNC</name>
<evidence type="ECO:0000250" key="1"/>
<evidence type="ECO:0000305" key="2"/>
<protein>
    <recommendedName>
        <fullName>Probable D-xylulose kinase A</fullName>
        <shortName>Xylulokinase A</shortName>
        <ecNumber>2.7.1.17</ecNumber>
    </recommendedName>
</protein>
<sequence length="570" mass="62762">MQGPLYIGFDLSTQQLKGLVVNSDLKVVYVSKFDFDADSHGFPIKKGVLTNEAEHEVFAPVALWLQALDGVLEGLRKQGMDFSQIKGISGAGQQHGSVYWGENAEKLLKELDASKTLEEQLDGAFSHPFSPNWQDSSTQKECDEFDAALGGQSELAFATGSKAHHRFTGPQIMRFQRKYPDVYKKTSRISLVSSFIASLFLGHIAPMDISDVCGMNLWNIKKGAYDEKLLQLCAGSSGVDDLKRKLGDVPEDGGIHLGPIDRYYVERYGFSPDCTIIPATGDNPATILALPLRASDAMVSLGTSTTFLMSTPSYKPDPATHFFNHPTTAGLYMFMLCYKNGGLARELVRDAVNEKLGEKPSTSWANFDKVTLETPPMGQKADSDPMKLGLFFPRPEIVPNLRSGQWRFDYNPKDGSLQPSNGGWDEPFDEARAIVESQMLSLRLRSRGLTQSPGEGIPAQPRRVYLVGGGSKNKAIAKVAGEILGGSEGVYKLEIGDNACALGAAYKAVWAMERAEGQTFEDLIGKRWHEEEFIEKIADGYQPGVFERYGQAAEGFEKMELEVLRQEGKH</sequence>
<feature type="chain" id="PRO_0000393520" description="Probable D-xylulose kinase A">
    <location>
        <begin position="1"/>
        <end position="570"/>
    </location>
</feature>
<feature type="binding site" evidence="1">
    <location>
        <position position="95"/>
    </location>
    <ligand>
        <name>substrate</name>
    </ligand>
</feature>
<feature type="binding site" evidence="1">
    <location>
        <position position="166"/>
    </location>
    <ligand>
        <name>substrate</name>
    </ligand>
</feature>
<feature type="binding site" evidence="1">
    <location>
        <position position="282"/>
    </location>
    <ligand>
        <name>substrate</name>
    </ligand>
</feature>
<feature type="binding site" evidence="1">
    <location>
        <position position="283"/>
    </location>
    <ligand>
        <name>substrate</name>
    </ligand>
</feature>
<feature type="binding site" evidence="1">
    <location>
        <position position="364"/>
    </location>
    <ligand>
        <name>ATP</name>
        <dbReference type="ChEBI" id="CHEBI:30616"/>
    </ligand>
</feature>
<feature type="binding site" evidence="1">
    <location>
        <begin position="469"/>
        <end position="470"/>
    </location>
    <ligand>
        <name>ATP</name>
        <dbReference type="ChEBI" id="CHEBI:30616"/>
    </ligand>
</feature>
<feature type="binding site" evidence="1">
    <location>
        <position position="473"/>
    </location>
    <ligand>
        <name>ATP</name>
        <dbReference type="ChEBI" id="CHEBI:30616"/>
    </ligand>
</feature>
<reference key="1">
    <citation type="journal article" date="2007" name="Nat. Biotechnol.">
        <title>Genome sequencing and analysis of the versatile cell factory Aspergillus niger CBS 513.88.</title>
        <authorList>
            <person name="Pel H.J."/>
            <person name="de Winde J.H."/>
            <person name="Archer D.B."/>
            <person name="Dyer P.S."/>
            <person name="Hofmann G."/>
            <person name="Schaap P.J."/>
            <person name="Turner G."/>
            <person name="de Vries R.P."/>
            <person name="Albang R."/>
            <person name="Albermann K."/>
            <person name="Andersen M.R."/>
            <person name="Bendtsen J.D."/>
            <person name="Benen J.A.E."/>
            <person name="van den Berg M."/>
            <person name="Breestraat S."/>
            <person name="Caddick M.X."/>
            <person name="Contreras R."/>
            <person name="Cornell M."/>
            <person name="Coutinho P.M."/>
            <person name="Danchin E.G.J."/>
            <person name="Debets A.J.M."/>
            <person name="Dekker P."/>
            <person name="van Dijck P.W.M."/>
            <person name="van Dijk A."/>
            <person name="Dijkhuizen L."/>
            <person name="Driessen A.J.M."/>
            <person name="d'Enfert C."/>
            <person name="Geysens S."/>
            <person name="Goosen C."/>
            <person name="Groot G.S.P."/>
            <person name="de Groot P.W.J."/>
            <person name="Guillemette T."/>
            <person name="Henrissat B."/>
            <person name="Herweijer M."/>
            <person name="van den Hombergh J.P.T.W."/>
            <person name="van den Hondel C.A.M.J.J."/>
            <person name="van der Heijden R.T.J.M."/>
            <person name="van der Kaaij R.M."/>
            <person name="Klis F.M."/>
            <person name="Kools H.J."/>
            <person name="Kubicek C.P."/>
            <person name="van Kuyk P.A."/>
            <person name="Lauber J."/>
            <person name="Lu X."/>
            <person name="van der Maarel M.J.E.C."/>
            <person name="Meulenberg R."/>
            <person name="Menke H."/>
            <person name="Mortimer M.A."/>
            <person name="Nielsen J."/>
            <person name="Oliver S.G."/>
            <person name="Olsthoorn M."/>
            <person name="Pal K."/>
            <person name="van Peij N.N.M.E."/>
            <person name="Ram A.F.J."/>
            <person name="Rinas U."/>
            <person name="Roubos J.A."/>
            <person name="Sagt C.M.J."/>
            <person name="Schmoll M."/>
            <person name="Sun J."/>
            <person name="Ussery D."/>
            <person name="Varga J."/>
            <person name="Vervecken W."/>
            <person name="van de Vondervoort P.J.J."/>
            <person name="Wedler H."/>
            <person name="Woesten H.A.B."/>
            <person name="Zeng A.-P."/>
            <person name="van Ooyen A.J.J."/>
            <person name="Visser J."/>
            <person name="Stam H."/>
        </authorList>
    </citation>
    <scope>NUCLEOTIDE SEQUENCE [LARGE SCALE GENOMIC DNA]</scope>
    <source>
        <strain>ATCC MYA-4892 / CBS 513.88 / FGSC A1513</strain>
    </source>
</reference>
<comment type="function">
    <text evidence="1">Highly specific D-xylulose kinase which participates in the catabolism of xylose. Xylose is a major component of hemicelluloses such as xylan. Most fungi utilize D-xylose via three enzymatic reactions, xylose reductase (XR), xylitol dehydrogenase (XDH), and xylulokinase, to form xylulose 5-phosphate, which enters pentose phosphate pathway (By similarity).</text>
</comment>
<comment type="catalytic activity">
    <reaction>
        <text>D-xylulose + ATP = D-xylulose 5-phosphate + ADP + H(+)</text>
        <dbReference type="Rhea" id="RHEA:10964"/>
        <dbReference type="ChEBI" id="CHEBI:15378"/>
        <dbReference type="ChEBI" id="CHEBI:17140"/>
        <dbReference type="ChEBI" id="CHEBI:30616"/>
        <dbReference type="ChEBI" id="CHEBI:57737"/>
        <dbReference type="ChEBI" id="CHEBI:456216"/>
        <dbReference type="EC" id="2.7.1.17"/>
    </reaction>
</comment>
<comment type="subcellular location">
    <subcellularLocation>
        <location evidence="1">Cytoplasm</location>
    </subcellularLocation>
</comment>
<comment type="induction">
    <text>By D-xylose, L-arabinose or L-arabitol.</text>
</comment>
<comment type="similarity">
    <text evidence="2">Belongs to the FGGY kinase family.</text>
</comment>